<gene>
    <name evidence="1" type="primary">tatA</name>
    <name type="ordered locus">VC_0086</name>
</gene>
<proteinExistence type="inferred from homology"/>
<keyword id="KW-0997">Cell inner membrane</keyword>
<keyword id="KW-1003">Cell membrane</keyword>
<keyword id="KW-0472">Membrane</keyword>
<keyword id="KW-0653">Protein transport</keyword>
<keyword id="KW-1185">Reference proteome</keyword>
<keyword id="KW-0811">Translocation</keyword>
<keyword id="KW-0812">Transmembrane</keyword>
<keyword id="KW-1133">Transmembrane helix</keyword>
<keyword id="KW-0813">Transport</keyword>
<feature type="chain" id="PRO_0000097961" description="Sec-independent protein translocase protein TatA">
    <location>
        <begin position="1"/>
        <end position="82"/>
    </location>
</feature>
<feature type="transmembrane region" description="Helical" evidence="1">
    <location>
        <begin position="1"/>
        <end position="21"/>
    </location>
</feature>
<dbReference type="EMBL" id="AE003852">
    <property type="protein sequence ID" value="AAF93264.1"/>
    <property type="molecule type" value="Genomic_DNA"/>
</dbReference>
<dbReference type="PIR" id="G82366">
    <property type="entry name" value="G82366"/>
</dbReference>
<dbReference type="RefSeq" id="NP_229745.1">
    <property type="nucleotide sequence ID" value="NC_002505.1"/>
</dbReference>
<dbReference type="RefSeq" id="WP_000508969.1">
    <property type="nucleotide sequence ID" value="NZ_LT906614.1"/>
</dbReference>
<dbReference type="SMR" id="P57051"/>
<dbReference type="STRING" id="243277.VC_0086"/>
<dbReference type="DNASU" id="2614860"/>
<dbReference type="EnsemblBacteria" id="AAF93264">
    <property type="protein sequence ID" value="AAF93264"/>
    <property type="gene ID" value="VC_0086"/>
</dbReference>
<dbReference type="GeneID" id="89513181"/>
<dbReference type="KEGG" id="vch:VC_0086"/>
<dbReference type="PATRIC" id="fig|243277.26.peg.83"/>
<dbReference type="eggNOG" id="COG1826">
    <property type="taxonomic scope" value="Bacteria"/>
</dbReference>
<dbReference type="HOGENOM" id="CLU_086034_5_1_6"/>
<dbReference type="PHI-base" id="PHI:2415"/>
<dbReference type="Proteomes" id="UP000000584">
    <property type="component" value="Chromosome 1"/>
</dbReference>
<dbReference type="GO" id="GO:0033281">
    <property type="term" value="C:TAT protein transport complex"/>
    <property type="evidence" value="ECO:0007669"/>
    <property type="project" value="UniProtKB-UniRule"/>
</dbReference>
<dbReference type="GO" id="GO:0008320">
    <property type="term" value="F:protein transmembrane transporter activity"/>
    <property type="evidence" value="ECO:0007669"/>
    <property type="project" value="UniProtKB-UniRule"/>
</dbReference>
<dbReference type="GO" id="GO:0043953">
    <property type="term" value="P:protein transport by the Tat complex"/>
    <property type="evidence" value="ECO:0007669"/>
    <property type="project" value="UniProtKB-UniRule"/>
</dbReference>
<dbReference type="FunFam" id="1.20.5.3310:FF:000001">
    <property type="entry name" value="Probable Sec-independent protein translocase protein TatE"/>
    <property type="match status" value="1"/>
</dbReference>
<dbReference type="Gene3D" id="1.20.5.3310">
    <property type="match status" value="1"/>
</dbReference>
<dbReference type="HAMAP" id="MF_00236">
    <property type="entry name" value="TatA_E"/>
    <property type="match status" value="1"/>
</dbReference>
<dbReference type="InterPro" id="IPR003369">
    <property type="entry name" value="TatA/B/E"/>
</dbReference>
<dbReference type="InterPro" id="IPR006312">
    <property type="entry name" value="TatA/E"/>
</dbReference>
<dbReference type="NCBIfam" id="NF002813">
    <property type="entry name" value="PRK02958.1"/>
    <property type="match status" value="1"/>
</dbReference>
<dbReference type="NCBIfam" id="NF003396">
    <property type="entry name" value="PRK04598.1"/>
    <property type="match status" value="1"/>
</dbReference>
<dbReference type="NCBIfam" id="TIGR01411">
    <property type="entry name" value="tatAE"/>
    <property type="match status" value="1"/>
</dbReference>
<dbReference type="PANTHER" id="PTHR42982">
    <property type="entry name" value="SEC-INDEPENDENT PROTEIN TRANSLOCASE PROTEIN TATA"/>
    <property type="match status" value="1"/>
</dbReference>
<dbReference type="PANTHER" id="PTHR42982:SF1">
    <property type="entry name" value="SEC-INDEPENDENT PROTEIN TRANSLOCASE PROTEIN TATA"/>
    <property type="match status" value="1"/>
</dbReference>
<dbReference type="Pfam" id="PF02416">
    <property type="entry name" value="TatA_B_E"/>
    <property type="match status" value="1"/>
</dbReference>
<protein>
    <recommendedName>
        <fullName evidence="1">Sec-independent protein translocase protein TatA</fullName>
    </recommendedName>
</protein>
<sequence>MGGISIWQLLIIAVIVVLLFGTKKLRGIGSDLGSAVKGFKKAMSEEESNSAANQKDADFETKNLEQAKTNASAEVKKDKEQA</sequence>
<organism>
    <name type="scientific">Vibrio cholerae serotype O1 (strain ATCC 39315 / El Tor Inaba N16961)</name>
    <dbReference type="NCBI Taxonomy" id="243277"/>
    <lineage>
        <taxon>Bacteria</taxon>
        <taxon>Pseudomonadati</taxon>
        <taxon>Pseudomonadota</taxon>
        <taxon>Gammaproteobacteria</taxon>
        <taxon>Vibrionales</taxon>
        <taxon>Vibrionaceae</taxon>
        <taxon>Vibrio</taxon>
    </lineage>
</organism>
<name>TATA_VIBCH</name>
<accession>P57051</accession>
<evidence type="ECO:0000255" key="1">
    <source>
        <dbReference type="HAMAP-Rule" id="MF_00236"/>
    </source>
</evidence>
<reference key="1">
    <citation type="journal article" date="2000" name="Nature">
        <title>DNA sequence of both chromosomes of the cholera pathogen Vibrio cholerae.</title>
        <authorList>
            <person name="Heidelberg J.F."/>
            <person name="Eisen J.A."/>
            <person name="Nelson W.C."/>
            <person name="Clayton R.A."/>
            <person name="Gwinn M.L."/>
            <person name="Dodson R.J."/>
            <person name="Haft D.H."/>
            <person name="Hickey E.K."/>
            <person name="Peterson J.D."/>
            <person name="Umayam L.A."/>
            <person name="Gill S.R."/>
            <person name="Nelson K.E."/>
            <person name="Read T.D."/>
            <person name="Tettelin H."/>
            <person name="Richardson D.L."/>
            <person name="Ermolaeva M.D."/>
            <person name="Vamathevan J.J."/>
            <person name="Bass S."/>
            <person name="Qin H."/>
            <person name="Dragoi I."/>
            <person name="Sellers P."/>
            <person name="McDonald L.A."/>
            <person name="Utterback T.R."/>
            <person name="Fleischmann R.D."/>
            <person name="Nierman W.C."/>
            <person name="White O."/>
            <person name="Salzberg S.L."/>
            <person name="Smith H.O."/>
            <person name="Colwell R.R."/>
            <person name="Mekalanos J.J."/>
            <person name="Venter J.C."/>
            <person name="Fraser C.M."/>
        </authorList>
    </citation>
    <scope>NUCLEOTIDE SEQUENCE [LARGE SCALE GENOMIC DNA]</scope>
    <source>
        <strain>ATCC 39315 / El Tor Inaba N16961</strain>
    </source>
</reference>
<comment type="function">
    <text evidence="1">Part of the twin-arginine translocation (Tat) system that transports large folded proteins containing a characteristic twin-arginine motif in their signal peptide across membranes. TatA could form the protein-conducting channel of the Tat system.</text>
</comment>
<comment type="subunit">
    <text evidence="1">The Tat system comprises two distinct complexes: a TatABC complex, containing multiple copies of TatA, TatB and TatC subunits, and a separate TatA complex, containing only TatA subunits. Substrates initially bind to the TatABC complex, which probably triggers association of the separate TatA complex to form the active translocon.</text>
</comment>
<comment type="subcellular location">
    <subcellularLocation>
        <location evidence="1">Cell inner membrane</location>
        <topology evidence="1">Single-pass membrane protein</topology>
    </subcellularLocation>
</comment>
<comment type="similarity">
    <text evidence="1">Belongs to the TatA/E family.</text>
</comment>